<proteinExistence type="inferred from homology"/>
<reference key="1">
    <citation type="journal article" date="2015" name="Genome Announc.">
        <title>Draft genome sequence of the cellulolytic fungus Chaetomium globosum.</title>
        <authorList>
            <person name="Cuomo C.A."/>
            <person name="Untereiner W.A."/>
            <person name="Ma L.-J."/>
            <person name="Grabherr M."/>
            <person name="Birren B.W."/>
        </authorList>
    </citation>
    <scope>NUCLEOTIDE SEQUENCE [LARGE SCALE GENOMIC DNA]</scope>
    <source>
        <strain>ATCC 6205 / CBS 148.51 / DSM 1962 / NBRC 6347 / NRRL 1970</strain>
    </source>
</reference>
<name>GPI18_CHAGB</name>
<dbReference type="EC" id="2.4.1.-"/>
<dbReference type="EMBL" id="CH408034">
    <property type="protein sequence ID" value="EAQ85054.1"/>
    <property type="molecule type" value="Genomic_DNA"/>
</dbReference>
<dbReference type="RefSeq" id="XP_001226995.1">
    <property type="nucleotide sequence ID" value="XM_001226994.1"/>
</dbReference>
<dbReference type="FunCoup" id="Q2GSI6">
    <property type="interactions" value="255"/>
</dbReference>
<dbReference type="STRING" id="306901.Q2GSI6"/>
<dbReference type="GeneID" id="4395328"/>
<dbReference type="VEuPathDB" id="FungiDB:CHGG_09068"/>
<dbReference type="eggNOG" id="KOG2647">
    <property type="taxonomic scope" value="Eukaryota"/>
</dbReference>
<dbReference type="HOGENOM" id="CLU_029048_0_0_1"/>
<dbReference type="InParanoid" id="Q2GSI6"/>
<dbReference type="OMA" id="GALFIWC"/>
<dbReference type="OrthoDB" id="10252502at2759"/>
<dbReference type="UniPathway" id="UPA00196"/>
<dbReference type="Proteomes" id="UP000001056">
    <property type="component" value="Unassembled WGS sequence"/>
</dbReference>
<dbReference type="GO" id="GO:0005789">
    <property type="term" value="C:endoplasmic reticulum membrane"/>
    <property type="evidence" value="ECO:0007669"/>
    <property type="project" value="UniProtKB-SubCell"/>
</dbReference>
<dbReference type="GO" id="GO:0031501">
    <property type="term" value="C:mannosyltransferase complex"/>
    <property type="evidence" value="ECO:0007669"/>
    <property type="project" value="TreeGrafter"/>
</dbReference>
<dbReference type="GO" id="GO:0000009">
    <property type="term" value="F:alpha-1,6-mannosyltransferase activity"/>
    <property type="evidence" value="ECO:0007669"/>
    <property type="project" value="InterPro"/>
</dbReference>
<dbReference type="GO" id="GO:0004376">
    <property type="term" value="F:glycolipid mannosyltransferase activity"/>
    <property type="evidence" value="ECO:0007669"/>
    <property type="project" value="InterPro"/>
</dbReference>
<dbReference type="GO" id="GO:0006506">
    <property type="term" value="P:GPI anchor biosynthetic process"/>
    <property type="evidence" value="ECO:0007669"/>
    <property type="project" value="UniProtKB-UniPathway"/>
</dbReference>
<dbReference type="InterPro" id="IPR007315">
    <property type="entry name" value="PIG-V/Gpi18"/>
</dbReference>
<dbReference type="PANTHER" id="PTHR12468">
    <property type="entry name" value="GPI MANNOSYLTRANSFERASE 2"/>
    <property type="match status" value="1"/>
</dbReference>
<dbReference type="PANTHER" id="PTHR12468:SF2">
    <property type="entry name" value="GPI MANNOSYLTRANSFERASE 2"/>
    <property type="match status" value="1"/>
</dbReference>
<dbReference type="Pfam" id="PF04188">
    <property type="entry name" value="Mannosyl_trans2"/>
    <property type="match status" value="1"/>
</dbReference>
<gene>
    <name type="primary">GPI18</name>
    <name type="ORF">CHGG_09068</name>
</gene>
<feature type="chain" id="PRO_0000246244" description="GPI mannosyltransferase 2">
    <location>
        <begin position="1"/>
        <end position="471"/>
    </location>
</feature>
<feature type="transmembrane region" description="Helical" evidence="2">
    <location>
        <begin position="23"/>
        <end position="43"/>
    </location>
</feature>
<feature type="transmembrane region" description="Helical" evidence="2">
    <location>
        <begin position="135"/>
        <end position="155"/>
    </location>
</feature>
<feature type="transmembrane region" description="Helical" evidence="2">
    <location>
        <begin position="169"/>
        <end position="189"/>
    </location>
</feature>
<feature type="transmembrane region" description="Helical" evidence="2">
    <location>
        <begin position="190"/>
        <end position="210"/>
    </location>
</feature>
<feature type="transmembrane region" description="Helical" evidence="2">
    <location>
        <begin position="227"/>
        <end position="247"/>
    </location>
</feature>
<feature type="transmembrane region" description="Helical" evidence="2">
    <location>
        <begin position="277"/>
        <end position="297"/>
    </location>
</feature>
<feature type="transmembrane region" description="Helical" evidence="2">
    <location>
        <begin position="348"/>
        <end position="368"/>
    </location>
</feature>
<feature type="transmembrane region" description="Helical" evidence="2">
    <location>
        <begin position="449"/>
        <end position="469"/>
    </location>
</feature>
<accession>Q2GSI6</accession>
<keyword id="KW-0256">Endoplasmic reticulum</keyword>
<keyword id="KW-0328">Glycosyltransferase</keyword>
<keyword id="KW-0337">GPI-anchor biosynthesis</keyword>
<keyword id="KW-0472">Membrane</keyword>
<keyword id="KW-1185">Reference proteome</keyword>
<keyword id="KW-0808">Transferase</keyword>
<keyword id="KW-0812">Transmembrane</keyword>
<keyword id="KW-1133">Transmembrane helix</keyword>
<evidence type="ECO:0000250" key="1"/>
<evidence type="ECO:0000255" key="2"/>
<evidence type="ECO:0000305" key="3"/>
<protein>
    <recommendedName>
        <fullName>GPI mannosyltransferase 2</fullName>
        <ecNumber>2.4.1.-</ecNumber>
    </recommendedName>
    <alternativeName>
        <fullName>GPI mannosyltransferase II</fullName>
        <shortName>GPI-MT-II</shortName>
    </alternativeName>
    <alternativeName>
        <fullName>Glycosylphosphatidylinositol-anchor biosynthesis protein 18</fullName>
    </alternativeName>
</protein>
<sequence length="471" mass="50417">MAPKHQTPHTHAQIHTHPYRTLLTSFAAWKLFLFAIVLGSTLVGDAYDTSGGLLLQGPANGDAATRPAGLGTTLIARLTSWDAIYYVSAARRDYVFEQEWAFGAGLPFVVRTLLQGLEYVGIIDAPGAEGGRALVAEALAGILVANTAHLLSALVLYRLGQVVWRDQTLSLVAALLHVISPAGLFLSAPYSESSFALLSFSGYLLFALGCRAEGSSNSNNSPTRRDLYTISAGVLFGAATVFRSNGLLNGAPFALEVLRHLPAFVRRPTAIDTLRRLAALGVGGAAVAAGSLGPQAAAYLRYCIPSSSSGASDGEENLLLPRPWCQGYLPSIFTFVQQHYWNVGFLRYWTLPNLPLFLLATPMLVILVKSGVDSLRGRHLPGDAKAVDGESGRLLALIRSTAAAQVLLAVLAATTYHVQIITRISSGYPVWHWWLAGRLVQGDKTGSRIVMFMVIYASIQGALFASFLPPA</sequence>
<organism>
    <name type="scientific">Chaetomium globosum (strain ATCC 6205 / CBS 148.51 / DSM 1962 / NBRC 6347 / NRRL 1970)</name>
    <name type="common">Soil fungus</name>
    <dbReference type="NCBI Taxonomy" id="306901"/>
    <lineage>
        <taxon>Eukaryota</taxon>
        <taxon>Fungi</taxon>
        <taxon>Dikarya</taxon>
        <taxon>Ascomycota</taxon>
        <taxon>Pezizomycotina</taxon>
        <taxon>Sordariomycetes</taxon>
        <taxon>Sordariomycetidae</taxon>
        <taxon>Sordariales</taxon>
        <taxon>Chaetomiaceae</taxon>
        <taxon>Chaetomium</taxon>
    </lineage>
</organism>
<comment type="function">
    <text evidence="1">Mannosyltransferase involved in glycosylphosphatidylinositol-anchor biosynthesis. Transfers the second mannose to the glycosylphosphatidylinositol during GPI precursor assembly (By similarity).</text>
</comment>
<comment type="pathway">
    <text>Glycolipid biosynthesis; glycosylphosphatidylinositol-anchor biosynthesis.</text>
</comment>
<comment type="subcellular location">
    <subcellularLocation>
        <location evidence="1">Endoplasmic reticulum membrane</location>
        <topology evidence="1">Multi-pass membrane protein</topology>
    </subcellularLocation>
</comment>
<comment type="similarity">
    <text evidence="3">Belongs to the PIGV family.</text>
</comment>